<feature type="chain" id="PRO_0000256428" description="1-deoxy-D-xylulose-5-phosphate synthase">
    <location>
        <begin position="1"/>
        <end position="643"/>
    </location>
</feature>
<feature type="binding site" evidence="1">
    <location>
        <position position="89"/>
    </location>
    <ligand>
        <name>thiamine diphosphate</name>
        <dbReference type="ChEBI" id="CHEBI:58937"/>
    </ligand>
</feature>
<feature type="binding site" evidence="1">
    <location>
        <begin position="130"/>
        <end position="132"/>
    </location>
    <ligand>
        <name>thiamine diphosphate</name>
        <dbReference type="ChEBI" id="CHEBI:58937"/>
    </ligand>
</feature>
<feature type="binding site" evidence="1">
    <location>
        <position position="161"/>
    </location>
    <ligand>
        <name>Mg(2+)</name>
        <dbReference type="ChEBI" id="CHEBI:18420"/>
    </ligand>
</feature>
<feature type="binding site" evidence="1">
    <location>
        <begin position="162"/>
        <end position="163"/>
    </location>
    <ligand>
        <name>thiamine diphosphate</name>
        <dbReference type="ChEBI" id="CHEBI:58937"/>
    </ligand>
</feature>
<feature type="binding site" evidence="1">
    <location>
        <position position="190"/>
    </location>
    <ligand>
        <name>Mg(2+)</name>
        <dbReference type="ChEBI" id="CHEBI:18420"/>
    </ligand>
</feature>
<feature type="binding site" evidence="1">
    <location>
        <position position="190"/>
    </location>
    <ligand>
        <name>thiamine diphosphate</name>
        <dbReference type="ChEBI" id="CHEBI:58937"/>
    </ligand>
</feature>
<feature type="binding site" evidence="1">
    <location>
        <position position="297"/>
    </location>
    <ligand>
        <name>thiamine diphosphate</name>
        <dbReference type="ChEBI" id="CHEBI:58937"/>
    </ligand>
</feature>
<feature type="binding site" evidence="1">
    <location>
        <position position="380"/>
    </location>
    <ligand>
        <name>thiamine diphosphate</name>
        <dbReference type="ChEBI" id="CHEBI:58937"/>
    </ligand>
</feature>
<keyword id="KW-0414">Isoprene biosynthesis</keyword>
<keyword id="KW-0460">Magnesium</keyword>
<keyword id="KW-0479">Metal-binding</keyword>
<keyword id="KW-1185">Reference proteome</keyword>
<keyword id="KW-0784">Thiamine biosynthesis</keyword>
<keyword id="KW-0786">Thiamine pyrophosphate</keyword>
<keyword id="KW-0808">Transferase</keyword>
<organism>
    <name type="scientific">Hahella chejuensis (strain KCTC 2396)</name>
    <dbReference type="NCBI Taxonomy" id="349521"/>
    <lineage>
        <taxon>Bacteria</taxon>
        <taxon>Pseudomonadati</taxon>
        <taxon>Pseudomonadota</taxon>
        <taxon>Gammaproteobacteria</taxon>
        <taxon>Oceanospirillales</taxon>
        <taxon>Hahellaceae</taxon>
        <taxon>Hahella</taxon>
    </lineage>
</organism>
<gene>
    <name evidence="1" type="primary">dxs</name>
    <name type="ordered locus">HCH_05866</name>
</gene>
<sequence>MQKPYVFQEIPVHRPNTPLLDKIDSPAQLRLLNEAELLQLAHELRAFLLYSVGQSGGHFGAGLGVVELTVALHYAFNTPEDRLVWDVGHQAYPHKILTGRREQMLTIRQKDGLAAFPRREESPYDTFGVGHSSTSISAALGMAIAARLQNQPRKAIAVIGDGAMTAGMAFEALNHAADTKADLLVILNDNDMSISRNVGGLSNYFARLLASKTYNQMRDSGKRVLQGAPSLMELARKTEEHFKGMVAPGTLFEELGFNYIGPIDGHDLPRLVETLNNIKELNGPQFLHVVTKKGKGFAHAESDPIGYHAINKIEPKPKVQDTAKAPKKPRYSNIFGQWLCDMAEQDASLVGITPAMCEGSDLIEFSKRFPERYYDVAIAEQHAVTLAAGLACDGAKPVVAIYSTFLQRAYDQLIHDVAIQNLDVLFAIDRAGLVGEDGPTHAGSFDLTFLRCIPNMLIMAPSDEDETRKMLTTGYQYTGPAAVRYPRGNGPGADISPGLESLEIGKANLRRRGAQTVILNFGALLPAALGVAEESNFTVVDMRFIKPLDQNMILEMAGSHDLLVTLEENCILGGAGSGVIEFLASQGIAMPVLQLGLPDEFIEHGKPAELHKEVGLDAQGIANAIKKRLKSLNLASPKTGTSA</sequence>
<proteinExistence type="inferred from homology"/>
<protein>
    <recommendedName>
        <fullName evidence="1">1-deoxy-D-xylulose-5-phosphate synthase</fullName>
        <ecNumber evidence="1">2.2.1.7</ecNumber>
    </recommendedName>
    <alternativeName>
        <fullName evidence="1">1-deoxyxylulose-5-phosphate synthase</fullName>
        <shortName evidence="1">DXP synthase</shortName>
        <shortName evidence="1">DXPS</shortName>
    </alternativeName>
</protein>
<accession>Q2SA08</accession>
<reference key="1">
    <citation type="journal article" date="2005" name="Nucleic Acids Res.">
        <title>Genomic blueprint of Hahella chejuensis, a marine microbe producing an algicidal agent.</title>
        <authorList>
            <person name="Jeong H."/>
            <person name="Yim J.H."/>
            <person name="Lee C."/>
            <person name="Choi S.-H."/>
            <person name="Park Y.K."/>
            <person name="Yoon S.H."/>
            <person name="Hur C.-G."/>
            <person name="Kang H.-Y."/>
            <person name="Kim D."/>
            <person name="Lee H.H."/>
            <person name="Park K.H."/>
            <person name="Park S.-H."/>
            <person name="Park H.-S."/>
            <person name="Lee H.K."/>
            <person name="Oh T.K."/>
            <person name="Kim J.F."/>
        </authorList>
    </citation>
    <scope>NUCLEOTIDE SEQUENCE [LARGE SCALE GENOMIC DNA]</scope>
    <source>
        <strain>KCTC 2396</strain>
    </source>
</reference>
<comment type="function">
    <text evidence="1">Catalyzes the acyloin condensation reaction between C atoms 2 and 3 of pyruvate and glyceraldehyde 3-phosphate to yield 1-deoxy-D-xylulose-5-phosphate (DXP).</text>
</comment>
<comment type="catalytic activity">
    <reaction evidence="1">
        <text>D-glyceraldehyde 3-phosphate + pyruvate + H(+) = 1-deoxy-D-xylulose 5-phosphate + CO2</text>
        <dbReference type="Rhea" id="RHEA:12605"/>
        <dbReference type="ChEBI" id="CHEBI:15361"/>
        <dbReference type="ChEBI" id="CHEBI:15378"/>
        <dbReference type="ChEBI" id="CHEBI:16526"/>
        <dbReference type="ChEBI" id="CHEBI:57792"/>
        <dbReference type="ChEBI" id="CHEBI:59776"/>
        <dbReference type="EC" id="2.2.1.7"/>
    </reaction>
</comment>
<comment type="cofactor">
    <cofactor evidence="1">
        <name>Mg(2+)</name>
        <dbReference type="ChEBI" id="CHEBI:18420"/>
    </cofactor>
    <text evidence="1">Binds 1 Mg(2+) ion per subunit.</text>
</comment>
<comment type="cofactor">
    <cofactor evidence="1">
        <name>thiamine diphosphate</name>
        <dbReference type="ChEBI" id="CHEBI:58937"/>
    </cofactor>
    <text evidence="1">Binds 1 thiamine pyrophosphate per subunit.</text>
</comment>
<comment type="pathway">
    <text evidence="1">Metabolic intermediate biosynthesis; 1-deoxy-D-xylulose 5-phosphate biosynthesis; 1-deoxy-D-xylulose 5-phosphate from D-glyceraldehyde 3-phosphate and pyruvate: step 1/1.</text>
</comment>
<comment type="subunit">
    <text evidence="1">Homodimer.</text>
</comment>
<comment type="similarity">
    <text evidence="1">Belongs to the transketolase family. DXPS subfamily.</text>
</comment>
<name>DXS_HAHCH</name>
<dbReference type="EC" id="2.2.1.7" evidence="1"/>
<dbReference type="EMBL" id="CP000155">
    <property type="protein sequence ID" value="ABC32516.1"/>
    <property type="molecule type" value="Genomic_DNA"/>
</dbReference>
<dbReference type="RefSeq" id="WP_011399575.1">
    <property type="nucleotide sequence ID" value="NC_007645.1"/>
</dbReference>
<dbReference type="SMR" id="Q2SA08"/>
<dbReference type="STRING" id="349521.HCH_05866"/>
<dbReference type="KEGG" id="hch:HCH_05866"/>
<dbReference type="eggNOG" id="COG1154">
    <property type="taxonomic scope" value="Bacteria"/>
</dbReference>
<dbReference type="HOGENOM" id="CLU_009227_1_4_6"/>
<dbReference type="OrthoDB" id="9803371at2"/>
<dbReference type="UniPathway" id="UPA00064">
    <property type="reaction ID" value="UER00091"/>
</dbReference>
<dbReference type="Proteomes" id="UP000000238">
    <property type="component" value="Chromosome"/>
</dbReference>
<dbReference type="GO" id="GO:0005829">
    <property type="term" value="C:cytosol"/>
    <property type="evidence" value="ECO:0007669"/>
    <property type="project" value="TreeGrafter"/>
</dbReference>
<dbReference type="GO" id="GO:0008661">
    <property type="term" value="F:1-deoxy-D-xylulose-5-phosphate synthase activity"/>
    <property type="evidence" value="ECO:0007669"/>
    <property type="project" value="UniProtKB-UniRule"/>
</dbReference>
<dbReference type="GO" id="GO:0000287">
    <property type="term" value="F:magnesium ion binding"/>
    <property type="evidence" value="ECO:0007669"/>
    <property type="project" value="UniProtKB-UniRule"/>
</dbReference>
<dbReference type="GO" id="GO:0030976">
    <property type="term" value="F:thiamine pyrophosphate binding"/>
    <property type="evidence" value="ECO:0007669"/>
    <property type="project" value="UniProtKB-UniRule"/>
</dbReference>
<dbReference type="GO" id="GO:0052865">
    <property type="term" value="P:1-deoxy-D-xylulose 5-phosphate biosynthetic process"/>
    <property type="evidence" value="ECO:0007669"/>
    <property type="project" value="UniProtKB-UniPathway"/>
</dbReference>
<dbReference type="GO" id="GO:0019288">
    <property type="term" value="P:isopentenyl diphosphate biosynthetic process, methylerythritol 4-phosphate pathway"/>
    <property type="evidence" value="ECO:0007669"/>
    <property type="project" value="TreeGrafter"/>
</dbReference>
<dbReference type="GO" id="GO:0016114">
    <property type="term" value="P:terpenoid biosynthetic process"/>
    <property type="evidence" value="ECO:0007669"/>
    <property type="project" value="UniProtKB-UniRule"/>
</dbReference>
<dbReference type="GO" id="GO:0009228">
    <property type="term" value="P:thiamine biosynthetic process"/>
    <property type="evidence" value="ECO:0007669"/>
    <property type="project" value="UniProtKB-UniRule"/>
</dbReference>
<dbReference type="CDD" id="cd02007">
    <property type="entry name" value="TPP_DXS"/>
    <property type="match status" value="1"/>
</dbReference>
<dbReference type="CDD" id="cd07033">
    <property type="entry name" value="TPP_PYR_DXS_TK_like"/>
    <property type="match status" value="1"/>
</dbReference>
<dbReference type="FunFam" id="3.40.50.920:FF:000002">
    <property type="entry name" value="1-deoxy-D-xylulose-5-phosphate synthase"/>
    <property type="match status" value="1"/>
</dbReference>
<dbReference type="FunFam" id="3.40.50.970:FF:000005">
    <property type="entry name" value="1-deoxy-D-xylulose-5-phosphate synthase"/>
    <property type="match status" value="1"/>
</dbReference>
<dbReference type="Gene3D" id="3.40.50.920">
    <property type="match status" value="1"/>
</dbReference>
<dbReference type="Gene3D" id="3.40.50.970">
    <property type="match status" value="2"/>
</dbReference>
<dbReference type="HAMAP" id="MF_00315">
    <property type="entry name" value="DXP_synth"/>
    <property type="match status" value="1"/>
</dbReference>
<dbReference type="InterPro" id="IPR005477">
    <property type="entry name" value="Dxylulose-5-P_synthase"/>
</dbReference>
<dbReference type="InterPro" id="IPR029061">
    <property type="entry name" value="THDP-binding"/>
</dbReference>
<dbReference type="InterPro" id="IPR009014">
    <property type="entry name" value="Transketo_C/PFOR_II"/>
</dbReference>
<dbReference type="InterPro" id="IPR005475">
    <property type="entry name" value="Transketolase-like_Pyr-bd"/>
</dbReference>
<dbReference type="InterPro" id="IPR020826">
    <property type="entry name" value="Transketolase_BS"/>
</dbReference>
<dbReference type="InterPro" id="IPR033248">
    <property type="entry name" value="Transketolase_C"/>
</dbReference>
<dbReference type="NCBIfam" id="TIGR00204">
    <property type="entry name" value="dxs"/>
    <property type="match status" value="1"/>
</dbReference>
<dbReference type="NCBIfam" id="NF003933">
    <property type="entry name" value="PRK05444.2-2"/>
    <property type="match status" value="1"/>
</dbReference>
<dbReference type="PANTHER" id="PTHR43322">
    <property type="entry name" value="1-D-DEOXYXYLULOSE 5-PHOSPHATE SYNTHASE-RELATED"/>
    <property type="match status" value="1"/>
</dbReference>
<dbReference type="PANTHER" id="PTHR43322:SF5">
    <property type="entry name" value="1-DEOXY-D-XYLULOSE-5-PHOSPHATE SYNTHASE, CHLOROPLASTIC"/>
    <property type="match status" value="1"/>
</dbReference>
<dbReference type="Pfam" id="PF13292">
    <property type="entry name" value="DXP_synthase_N"/>
    <property type="match status" value="1"/>
</dbReference>
<dbReference type="Pfam" id="PF02779">
    <property type="entry name" value="Transket_pyr"/>
    <property type="match status" value="1"/>
</dbReference>
<dbReference type="Pfam" id="PF02780">
    <property type="entry name" value="Transketolase_C"/>
    <property type="match status" value="1"/>
</dbReference>
<dbReference type="SMART" id="SM00861">
    <property type="entry name" value="Transket_pyr"/>
    <property type="match status" value="1"/>
</dbReference>
<dbReference type="SUPFAM" id="SSF52518">
    <property type="entry name" value="Thiamin diphosphate-binding fold (THDP-binding)"/>
    <property type="match status" value="2"/>
</dbReference>
<dbReference type="SUPFAM" id="SSF52922">
    <property type="entry name" value="TK C-terminal domain-like"/>
    <property type="match status" value="1"/>
</dbReference>
<dbReference type="PROSITE" id="PS00802">
    <property type="entry name" value="TRANSKETOLASE_2"/>
    <property type="match status" value="1"/>
</dbReference>
<evidence type="ECO:0000255" key="1">
    <source>
        <dbReference type="HAMAP-Rule" id="MF_00315"/>
    </source>
</evidence>